<feature type="chain" id="PRO_0000121641" description="tRNA-specific 2-thiouridylase MnmA">
    <location>
        <begin position="1"/>
        <end position="375"/>
    </location>
</feature>
<feature type="region of interest" description="Interaction with target base in tRNA" evidence="1">
    <location>
        <begin position="98"/>
        <end position="100"/>
    </location>
</feature>
<feature type="region of interest" description="Interaction with tRNA" evidence="1">
    <location>
        <begin position="150"/>
        <end position="152"/>
    </location>
</feature>
<feature type="region of interest" description="Interaction with tRNA" evidence="1">
    <location>
        <begin position="312"/>
        <end position="313"/>
    </location>
</feature>
<feature type="active site" description="Nucleophile" evidence="1">
    <location>
        <position position="103"/>
    </location>
</feature>
<feature type="active site" description="Cysteine persulfide intermediate" evidence="1">
    <location>
        <position position="200"/>
    </location>
</feature>
<feature type="binding site" evidence="1">
    <location>
        <begin position="12"/>
        <end position="19"/>
    </location>
    <ligand>
        <name>ATP</name>
        <dbReference type="ChEBI" id="CHEBI:30616"/>
    </ligand>
</feature>
<feature type="binding site" evidence="1">
    <location>
        <position position="38"/>
    </location>
    <ligand>
        <name>ATP</name>
        <dbReference type="ChEBI" id="CHEBI:30616"/>
    </ligand>
</feature>
<feature type="binding site" evidence="1">
    <location>
        <position position="127"/>
    </location>
    <ligand>
        <name>ATP</name>
        <dbReference type="ChEBI" id="CHEBI:30616"/>
    </ligand>
</feature>
<feature type="site" description="Interaction with tRNA" evidence="1">
    <location>
        <position position="128"/>
    </location>
</feature>
<feature type="site" description="Interaction with tRNA" evidence="1">
    <location>
        <position position="346"/>
    </location>
</feature>
<feature type="disulfide bond" description="Alternate" evidence="1">
    <location>
        <begin position="103"/>
        <end position="200"/>
    </location>
</feature>
<sequence length="375" mass="41950">MVDNSKIRVVVGMSGGVDSSVSALLLKQQGFDVVGVFMKNWDDTDDSGVCTATEDYEDVKKVADEIGIPYYSINFEKDYWERVFEYFLDEYKKGRTPNPDVMCNKEIKFKSFLDFAMDLDADYIAMGHYAATRVDDNGVVHMMRPKDGNKDQTYFLSQLSQDQLKKVIFPLANLTKPQVREIAIASGLATAKKKDSTGICFIGERNFKKFLSEFLPAQSGKMVTPDGKVVGEHAGLMYYTIGQRSGLGLGSTKESTDPWFVVGKDLKKNELIVEQGYDSKLLYATSLDASGVSFFTGQPDHDVDLKCTAKFRYRQPDVGVTMHYRAKDNTVHVEFDEPARAVTPGQAIVFYNGEECLGGATIDRAYQNEKQLQLV</sequence>
<accession>Q74JW9</accession>
<reference key="1">
    <citation type="journal article" date="2004" name="Proc. Natl. Acad. Sci. U.S.A.">
        <title>The genome sequence of the probiotic intestinal bacterium Lactobacillus johnsonii NCC 533.</title>
        <authorList>
            <person name="Pridmore R.D."/>
            <person name="Berger B."/>
            <person name="Desiere F."/>
            <person name="Vilanova D."/>
            <person name="Barretto C."/>
            <person name="Pittet A.-C."/>
            <person name="Zwahlen M.-C."/>
            <person name="Rouvet M."/>
            <person name="Altermann E."/>
            <person name="Barrangou R."/>
            <person name="Mollet B."/>
            <person name="Mercenier A."/>
            <person name="Klaenhammer T."/>
            <person name="Arigoni F."/>
            <person name="Schell M.A."/>
        </authorList>
    </citation>
    <scope>NUCLEOTIDE SEQUENCE [LARGE SCALE GENOMIC DNA]</scope>
    <source>
        <strain>CNCM I-1225 / La1 / NCC 533</strain>
    </source>
</reference>
<gene>
    <name evidence="1" type="primary">mnmA</name>
    <name type="synonym">trmU</name>
    <name type="ordered locus">LJ_0986</name>
</gene>
<dbReference type="EC" id="2.8.1.13" evidence="1"/>
<dbReference type="EMBL" id="AE017198">
    <property type="protein sequence ID" value="AAS08808.1"/>
    <property type="molecule type" value="Genomic_DNA"/>
</dbReference>
<dbReference type="RefSeq" id="WP_004897566.1">
    <property type="nucleotide sequence ID" value="NC_005362.1"/>
</dbReference>
<dbReference type="SMR" id="Q74JW9"/>
<dbReference type="KEGG" id="ljo:LJ_0986"/>
<dbReference type="eggNOG" id="COG0482">
    <property type="taxonomic scope" value="Bacteria"/>
</dbReference>
<dbReference type="HOGENOM" id="CLU_035188_1_0_9"/>
<dbReference type="Proteomes" id="UP000000581">
    <property type="component" value="Chromosome"/>
</dbReference>
<dbReference type="GO" id="GO:0005737">
    <property type="term" value="C:cytoplasm"/>
    <property type="evidence" value="ECO:0007669"/>
    <property type="project" value="UniProtKB-SubCell"/>
</dbReference>
<dbReference type="GO" id="GO:0005524">
    <property type="term" value="F:ATP binding"/>
    <property type="evidence" value="ECO:0007669"/>
    <property type="project" value="UniProtKB-KW"/>
</dbReference>
<dbReference type="GO" id="GO:0000049">
    <property type="term" value="F:tRNA binding"/>
    <property type="evidence" value="ECO:0007669"/>
    <property type="project" value="UniProtKB-KW"/>
</dbReference>
<dbReference type="GO" id="GO:0103016">
    <property type="term" value="F:tRNA-uridine 2-sulfurtransferase activity"/>
    <property type="evidence" value="ECO:0007669"/>
    <property type="project" value="UniProtKB-EC"/>
</dbReference>
<dbReference type="GO" id="GO:0002143">
    <property type="term" value="P:tRNA wobble position uridine thiolation"/>
    <property type="evidence" value="ECO:0007669"/>
    <property type="project" value="TreeGrafter"/>
</dbReference>
<dbReference type="CDD" id="cd01998">
    <property type="entry name" value="MnmA_TRMU-like"/>
    <property type="match status" value="1"/>
</dbReference>
<dbReference type="FunFam" id="2.30.30.280:FF:000001">
    <property type="entry name" value="tRNA-specific 2-thiouridylase MnmA"/>
    <property type="match status" value="1"/>
</dbReference>
<dbReference type="FunFam" id="2.40.30.10:FF:000023">
    <property type="entry name" value="tRNA-specific 2-thiouridylase MnmA"/>
    <property type="match status" value="1"/>
</dbReference>
<dbReference type="FunFam" id="3.40.50.620:FF:000004">
    <property type="entry name" value="tRNA-specific 2-thiouridylase MnmA"/>
    <property type="match status" value="1"/>
</dbReference>
<dbReference type="Gene3D" id="2.30.30.280">
    <property type="entry name" value="Adenine nucleotide alpha hydrolases-like domains"/>
    <property type="match status" value="1"/>
</dbReference>
<dbReference type="Gene3D" id="3.40.50.620">
    <property type="entry name" value="HUPs"/>
    <property type="match status" value="1"/>
</dbReference>
<dbReference type="Gene3D" id="2.40.30.10">
    <property type="entry name" value="Translation factors"/>
    <property type="match status" value="1"/>
</dbReference>
<dbReference type="HAMAP" id="MF_00144">
    <property type="entry name" value="tRNA_thiouridyl_MnmA"/>
    <property type="match status" value="1"/>
</dbReference>
<dbReference type="InterPro" id="IPR004506">
    <property type="entry name" value="MnmA-like"/>
</dbReference>
<dbReference type="InterPro" id="IPR046885">
    <property type="entry name" value="MnmA-like_C"/>
</dbReference>
<dbReference type="InterPro" id="IPR046884">
    <property type="entry name" value="MnmA-like_central"/>
</dbReference>
<dbReference type="InterPro" id="IPR023382">
    <property type="entry name" value="MnmA-like_central_sf"/>
</dbReference>
<dbReference type="InterPro" id="IPR014729">
    <property type="entry name" value="Rossmann-like_a/b/a_fold"/>
</dbReference>
<dbReference type="NCBIfam" id="NF001138">
    <property type="entry name" value="PRK00143.1"/>
    <property type="match status" value="1"/>
</dbReference>
<dbReference type="NCBIfam" id="TIGR00420">
    <property type="entry name" value="trmU"/>
    <property type="match status" value="1"/>
</dbReference>
<dbReference type="PANTHER" id="PTHR11933:SF5">
    <property type="entry name" value="MITOCHONDRIAL TRNA-SPECIFIC 2-THIOURIDYLASE 1"/>
    <property type="match status" value="1"/>
</dbReference>
<dbReference type="PANTHER" id="PTHR11933">
    <property type="entry name" value="TRNA 5-METHYLAMINOMETHYL-2-THIOURIDYLATE -METHYLTRANSFERASE"/>
    <property type="match status" value="1"/>
</dbReference>
<dbReference type="Pfam" id="PF03054">
    <property type="entry name" value="tRNA_Me_trans"/>
    <property type="match status" value="1"/>
</dbReference>
<dbReference type="Pfam" id="PF20258">
    <property type="entry name" value="tRNA_Me_trans_C"/>
    <property type="match status" value="1"/>
</dbReference>
<dbReference type="Pfam" id="PF20259">
    <property type="entry name" value="tRNA_Me_trans_M"/>
    <property type="match status" value="1"/>
</dbReference>
<dbReference type="SUPFAM" id="SSF52402">
    <property type="entry name" value="Adenine nucleotide alpha hydrolases-like"/>
    <property type="match status" value="1"/>
</dbReference>
<organism>
    <name type="scientific">Lactobacillus johnsonii (strain CNCM I-12250 / La1 / NCC 533)</name>
    <dbReference type="NCBI Taxonomy" id="257314"/>
    <lineage>
        <taxon>Bacteria</taxon>
        <taxon>Bacillati</taxon>
        <taxon>Bacillota</taxon>
        <taxon>Bacilli</taxon>
        <taxon>Lactobacillales</taxon>
        <taxon>Lactobacillaceae</taxon>
        <taxon>Lactobacillus</taxon>
    </lineage>
</organism>
<name>MNMA_LACJO</name>
<evidence type="ECO:0000255" key="1">
    <source>
        <dbReference type="HAMAP-Rule" id="MF_00144"/>
    </source>
</evidence>
<protein>
    <recommendedName>
        <fullName evidence="1">tRNA-specific 2-thiouridylase MnmA</fullName>
        <ecNumber evidence="1">2.8.1.13</ecNumber>
    </recommendedName>
</protein>
<comment type="function">
    <text evidence="1">Catalyzes the 2-thiolation of uridine at the wobble position (U34) of tRNA, leading to the formation of s(2)U34.</text>
</comment>
<comment type="catalytic activity">
    <reaction evidence="1">
        <text>S-sulfanyl-L-cysteinyl-[protein] + uridine(34) in tRNA + AH2 + ATP = 2-thiouridine(34) in tRNA + L-cysteinyl-[protein] + A + AMP + diphosphate + H(+)</text>
        <dbReference type="Rhea" id="RHEA:47032"/>
        <dbReference type="Rhea" id="RHEA-COMP:10131"/>
        <dbReference type="Rhea" id="RHEA-COMP:11726"/>
        <dbReference type="Rhea" id="RHEA-COMP:11727"/>
        <dbReference type="Rhea" id="RHEA-COMP:11728"/>
        <dbReference type="ChEBI" id="CHEBI:13193"/>
        <dbReference type="ChEBI" id="CHEBI:15378"/>
        <dbReference type="ChEBI" id="CHEBI:17499"/>
        <dbReference type="ChEBI" id="CHEBI:29950"/>
        <dbReference type="ChEBI" id="CHEBI:30616"/>
        <dbReference type="ChEBI" id="CHEBI:33019"/>
        <dbReference type="ChEBI" id="CHEBI:61963"/>
        <dbReference type="ChEBI" id="CHEBI:65315"/>
        <dbReference type="ChEBI" id="CHEBI:87170"/>
        <dbReference type="ChEBI" id="CHEBI:456215"/>
        <dbReference type="EC" id="2.8.1.13"/>
    </reaction>
</comment>
<comment type="subcellular location">
    <subcellularLocation>
        <location evidence="1">Cytoplasm</location>
    </subcellularLocation>
</comment>
<comment type="similarity">
    <text evidence="1">Belongs to the MnmA/TRMU family.</text>
</comment>
<proteinExistence type="inferred from homology"/>
<keyword id="KW-0067">ATP-binding</keyword>
<keyword id="KW-0963">Cytoplasm</keyword>
<keyword id="KW-1015">Disulfide bond</keyword>
<keyword id="KW-0547">Nucleotide-binding</keyword>
<keyword id="KW-0694">RNA-binding</keyword>
<keyword id="KW-0808">Transferase</keyword>
<keyword id="KW-0819">tRNA processing</keyword>
<keyword id="KW-0820">tRNA-binding</keyword>